<keyword id="KW-0025">Alternative splicing</keyword>
<keyword id="KW-0963">Cytoplasm</keyword>
<keyword id="KW-0206">Cytoskeleton</keyword>
<keyword id="KW-1185">Reference proteome</keyword>
<keyword id="KW-0677">Repeat</keyword>
<gene>
    <name type="primary">Sfi1</name>
    <name type="synonym">Kiaa0542</name>
</gene>
<evidence type="ECO:0000250" key="1">
    <source>
        <dbReference type="UniProtKB" id="A8K8P3"/>
    </source>
</evidence>
<evidence type="ECO:0000256" key="2">
    <source>
        <dbReference type="SAM" id="MobiDB-lite"/>
    </source>
</evidence>
<evidence type="ECO:0000303" key="3">
    <source>
    </source>
</evidence>
<evidence type="ECO:0000303" key="4">
    <source>
    </source>
</evidence>
<evidence type="ECO:0000305" key="5"/>
<dbReference type="EMBL" id="AK129159">
    <property type="protein sequence ID" value="BAC97969.1"/>
    <property type="molecule type" value="mRNA"/>
</dbReference>
<dbReference type="EMBL" id="AK019095">
    <property type="protein sequence ID" value="BAB31543.1"/>
    <property type="molecule type" value="mRNA"/>
</dbReference>
<dbReference type="EMBL" id="AK133558">
    <property type="protein sequence ID" value="BAE21725.1"/>
    <property type="molecule type" value="mRNA"/>
</dbReference>
<dbReference type="EMBL" id="AL671968">
    <property type="status" value="NOT_ANNOTATED_CDS"/>
    <property type="molecule type" value="Genomic_DNA"/>
</dbReference>
<dbReference type="EMBL" id="BX572640">
    <property type="status" value="NOT_ANNOTATED_CDS"/>
    <property type="molecule type" value="Genomic_DNA"/>
</dbReference>
<dbReference type="EMBL" id="BC026390">
    <property type="protein sequence ID" value="AAH26390.1"/>
    <property type="molecule type" value="mRNA"/>
</dbReference>
<dbReference type="EMBL" id="BC046305">
    <property type="protein sequence ID" value="AAH46305.1"/>
    <property type="molecule type" value="mRNA"/>
</dbReference>
<dbReference type="EMBL" id="BC048950">
    <property type="protein sequence ID" value="AAH48950.1"/>
    <property type="status" value="ALT_INIT"/>
    <property type="molecule type" value="mRNA"/>
</dbReference>
<dbReference type="EMBL" id="BC106124">
    <property type="protein sequence ID" value="AAI06125.1"/>
    <property type="molecule type" value="mRNA"/>
</dbReference>
<dbReference type="CCDS" id="CCDS36094.1">
    <molecule id="Q3UZY0-1"/>
</dbReference>
<dbReference type="RefSeq" id="NP_084483.2">
    <molecule id="Q3UZY0-1"/>
    <property type="nucleotide sequence ID" value="NM_030207.3"/>
</dbReference>
<dbReference type="RefSeq" id="XP_006514959.1">
    <molecule id="Q3UZY0-1"/>
    <property type="nucleotide sequence ID" value="XM_006514896.3"/>
</dbReference>
<dbReference type="RefSeq" id="XP_006514961.1">
    <molecule id="Q3UZY0-2"/>
    <property type="nucleotide sequence ID" value="XM_006514898.3"/>
</dbReference>
<dbReference type="SMR" id="Q3UZY0"/>
<dbReference type="BioGRID" id="219683">
    <property type="interactions" value="2"/>
</dbReference>
<dbReference type="FunCoup" id="Q3UZY0">
    <property type="interactions" value="1210"/>
</dbReference>
<dbReference type="STRING" id="10090.ENSMUSP00000080066"/>
<dbReference type="GlyGen" id="Q3UZY0">
    <property type="glycosylation" value="1 site"/>
</dbReference>
<dbReference type="iPTMnet" id="Q3UZY0"/>
<dbReference type="PhosphoSitePlus" id="Q3UZY0"/>
<dbReference type="jPOST" id="Q3UZY0"/>
<dbReference type="PaxDb" id="10090-ENSMUSP00000080066"/>
<dbReference type="ProteomicsDB" id="261326">
    <molecule id="Q3UZY0-1"/>
</dbReference>
<dbReference type="ProteomicsDB" id="261327">
    <molecule id="Q3UZY0-2"/>
</dbReference>
<dbReference type="ProteomicsDB" id="261328">
    <molecule id="Q3UZY0-3"/>
</dbReference>
<dbReference type="Antibodypedia" id="45464">
    <property type="antibodies" value="54 antibodies from 16 providers"/>
</dbReference>
<dbReference type="Ensembl" id="ENSMUST00000066391.14">
    <molecule id="Q3UZY0-2"/>
    <property type="protein sequence ID" value="ENSMUSP00000067261.8"/>
    <property type="gene ID" value="ENSMUSG00000023764.19"/>
</dbReference>
<dbReference type="Ensembl" id="ENSMUST00000081318.13">
    <molecule id="Q3UZY0-1"/>
    <property type="protein sequence ID" value="ENSMUSP00000080066.7"/>
    <property type="gene ID" value="ENSMUSG00000023764.19"/>
</dbReference>
<dbReference type="GeneID" id="78887"/>
<dbReference type="KEGG" id="mmu:78887"/>
<dbReference type="UCSC" id="uc007hrs.1">
    <molecule id="Q3UZY0-2"/>
    <property type="organism name" value="mouse"/>
</dbReference>
<dbReference type="UCSC" id="uc007hrt.1">
    <molecule id="Q3UZY0-1"/>
    <property type="organism name" value="mouse"/>
</dbReference>
<dbReference type="UCSC" id="uc007hrx.1">
    <molecule id="Q3UZY0-3"/>
    <property type="organism name" value="mouse"/>
</dbReference>
<dbReference type="AGR" id="MGI:1926137"/>
<dbReference type="CTD" id="9814"/>
<dbReference type="MGI" id="MGI:1926137">
    <property type="gene designation" value="Sfi1"/>
</dbReference>
<dbReference type="VEuPathDB" id="HostDB:ENSMUSG00000023764"/>
<dbReference type="eggNOG" id="KOG4775">
    <property type="taxonomic scope" value="Eukaryota"/>
</dbReference>
<dbReference type="GeneTree" id="ENSGT00940000154110"/>
<dbReference type="InParanoid" id="Q3UZY0"/>
<dbReference type="OMA" id="RCENNEE"/>
<dbReference type="PhylomeDB" id="Q3UZY0"/>
<dbReference type="TreeFam" id="TF328940"/>
<dbReference type="Reactome" id="R-MMU-2565942">
    <property type="pathway name" value="Regulation of PLK1 Activity at G2/M Transition"/>
</dbReference>
<dbReference type="Reactome" id="R-MMU-380259">
    <property type="pathway name" value="Loss of Nlp from mitotic centrosomes"/>
</dbReference>
<dbReference type="Reactome" id="R-MMU-380270">
    <property type="pathway name" value="Recruitment of mitotic centrosome proteins and complexes"/>
</dbReference>
<dbReference type="Reactome" id="R-MMU-380284">
    <property type="pathway name" value="Loss of proteins required for interphase microtubule organization from the centrosome"/>
</dbReference>
<dbReference type="Reactome" id="R-MMU-380320">
    <property type="pathway name" value="Recruitment of NuMA to mitotic centrosomes"/>
</dbReference>
<dbReference type="Reactome" id="R-MMU-5620912">
    <property type="pathway name" value="Anchoring of the basal body to the plasma membrane"/>
</dbReference>
<dbReference type="Reactome" id="R-MMU-8854518">
    <property type="pathway name" value="AURKA Activation by TPX2"/>
</dbReference>
<dbReference type="BioGRID-ORCS" id="78887">
    <property type="hits" value="22 hits in 67 CRISPR screens"/>
</dbReference>
<dbReference type="ChiTaRS" id="Sfi1">
    <property type="organism name" value="mouse"/>
</dbReference>
<dbReference type="PRO" id="PR:Q3UZY0"/>
<dbReference type="Proteomes" id="UP000000589">
    <property type="component" value="Chromosome 11"/>
</dbReference>
<dbReference type="RNAct" id="Q3UZY0">
    <property type="molecule type" value="protein"/>
</dbReference>
<dbReference type="Bgee" id="ENSMUSG00000023764">
    <property type="expression patterns" value="Expressed in bronchus and 269 other cell types or tissues"/>
</dbReference>
<dbReference type="ExpressionAtlas" id="Q3UZY0">
    <property type="expression patterns" value="baseline and differential"/>
</dbReference>
<dbReference type="GO" id="GO:0005814">
    <property type="term" value="C:centriole"/>
    <property type="evidence" value="ECO:0000250"/>
    <property type="project" value="UniProtKB"/>
</dbReference>
<dbReference type="GO" id="GO:0005737">
    <property type="term" value="C:cytoplasm"/>
    <property type="evidence" value="ECO:0007669"/>
    <property type="project" value="UniProtKB-KW"/>
</dbReference>
<dbReference type="GO" id="GO:0019902">
    <property type="term" value="F:phosphatase binding"/>
    <property type="evidence" value="ECO:0000250"/>
    <property type="project" value="UniProtKB"/>
</dbReference>
<dbReference type="InterPro" id="IPR052270">
    <property type="entry name" value="CACF_protein"/>
</dbReference>
<dbReference type="PANTHER" id="PTHR22028:SF4">
    <property type="entry name" value="PROTEIN SFI1 HOMOLOG"/>
    <property type="match status" value="1"/>
</dbReference>
<dbReference type="PANTHER" id="PTHR22028">
    <property type="entry name" value="SFI1 SPINDLE BODY DOMAIN-CONTAINING PROTEIN-RELATED"/>
    <property type="match status" value="1"/>
</dbReference>
<organism>
    <name type="scientific">Mus musculus</name>
    <name type="common">Mouse</name>
    <dbReference type="NCBI Taxonomy" id="10090"/>
    <lineage>
        <taxon>Eukaryota</taxon>
        <taxon>Metazoa</taxon>
        <taxon>Chordata</taxon>
        <taxon>Craniata</taxon>
        <taxon>Vertebrata</taxon>
        <taxon>Euteleostomi</taxon>
        <taxon>Mammalia</taxon>
        <taxon>Eutheria</taxon>
        <taxon>Euarchontoglires</taxon>
        <taxon>Glires</taxon>
        <taxon>Rodentia</taxon>
        <taxon>Myomorpha</taxon>
        <taxon>Muroidea</taxon>
        <taxon>Muridae</taxon>
        <taxon>Murinae</taxon>
        <taxon>Mus</taxon>
        <taxon>Mus</taxon>
    </lineage>
</organism>
<sequence length="1216" mass="144033">MEKKIGSRSFRDGVVKKPCSPKTLPLKKSSAFSGIQREPSRSCHSIYYHASQNWTRYRLQELRIRCVARKFLYLWIRVTFGRVTPSRARIFHEQKILQKVFGEWREEWWVSQREWKLCVRADCHYRYYLYNLIFQNWKTFVHQQREMRKRFRIAEHHDTKQKMCQAWKSWLIYMVSRRTKLHMKTTALEFRRQSVLCFWWSKWRWRLGQAHAEHALHAVAVKHRALSLQLQGWLRWQEQLLISQRDRRKEATAVQHYQHWQKQRSLKAWLKYLQICRVKRWQNEMAVQFHRATVLQIHFCDWQWAWEWRQSLSAHQALVVKLAGRMVLRRAFTHWKHYMLLQAEEAAQREAAAEHRQHYLLYSCFRAFKDNVTQARLQQTRKKLAQQLRDTTLLHRFWNLWQSRIEQREERVQTPSLHAALSHYRVTVLHKCVRVWLRYVHKRQWQQLLRARADGHFQQRALPAAFYTWYRGWLWHQQRRILHTKAVRFHRGTLEKQVFALWRQKMSQHRENCLAERMAILQAEQQLLRRFWFVWHQQAAVCQLERQQQAMAIAHHHSGLLRRAFCIWKESTQGFRIERMGRAQAAHFHSAQLLSRAWSMWRECLALRLEEQQKLKCAALHSQCILLRRALQKWLVYQNRVRSVLREVAARERQHNRQLLWWALHLWRENTMARLDGAKKTSQARVHYSRTLCSKVLVQWREVTSVQIYYRQKEAAALREARKALDRGRLQNWFQHWRFCSQRAAQQRFQLGQAAQHHHWQLLMEAMARWKAHHLGCIRKKFLQRQAAQLLAQRLSRACFCQWRKQLAVRKQEQWGTARALWLWAFSLQAKVWTAWLGFVLERRRKKARLERAMQAYQQQLLQEGATRLLRFTAGTKAFRQQLQAQQQVQAAHSLHCAVRHCAELWKKKVLGPGKTSQPPAPTTFSKRVTFKDSFLSGHAAEAGDATQETKKLRAPPSQGVLGSLAGAAGEPCHLDLNAARSSRKQPRRPSFLLERLGSQRSPEWYSLGEQQLEKPPEEESTALLGGSSLTRPFLPGVLPNVPGPKLPPTASPGLELLPPSSIMPHAAGGTARVSAKPSIPGPQPWGCPSLPRDLDPQLLPGDSISTRTEPVYGSEATGHTELEAELEGIQQQLQHYQTTKQNLWSCQRQANSLRRWLELSQEEPKSEDLHLEEQVKTELEEVELQVQQLAKELEAQRQPVGTCIARVRALRRALC</sequence>
<accession>Q3UZY0</accession>
<accession>Q3KQN2</accession>
<accession>Q5NC00</accession>
<accession>Q6ZQ99</accession>
<accession>Q80ZJ4</accession>
<accession>Q80ZY0</accession>
<accession>Q8R0V8</accession>
<accession>Q9CTY8</accession>
<name>SFI1_MOUSE</name>
<reference key="1">
    <citation type="journal article" date="2003" name="DNA Res.">
        <title>Prediction of the coding sequences of mouse homologues of KIAA gene: III. The complete nucleotide sequences of 500 mouse KIAA-homologous cDNAs identified by screening of terminal sequences of cDNA clones randomly sampled from size-fractionated libraries.</title>
        <authorList>
            <person name="Okazaki N."/>
            <person name="Kikuno R."/>
            <person name="Ohara R."/>
            <person name="Inamoto S."/>
            <person name="Koseki H."/>
            <person name="Hiraoka S."/>
            <person name="Saga Y."/>
            <person name="Nagase T."/>
            <person name="Ohara O."/>
            <person name="Koga H."/>
        </authorList>
    </citation>
    <scope>NUCLEOTIDE SEQUENCE [LARGE SCALE MRNA] (ISOFORM 5)</scope>
    <source>
        <tissue>Embryonic tail</tissue>
    </source>
</reference>
<reference key="2">
    <citation type="journal article" date="2005" name="Science">
        <title>The transcriptional landscape of the mammalian genome.</title>
        <authorList>
            <person name="Carninci P."/>
            <person name="Kasukawa T."/>
            <person name="Katayama S."/>
            <person name="Gough J."/>
            <person name="Frith M.C."/>
            <person name="Maeda N."/>
            <person name="Oyama R."/>
            <person name="Ravasi T."/>
            <person name="Lenhard B."/>
            <person name="Wells C."/>
            <person name="Kodzius R."/>
            <person name="Shimokawa K."/>
            <person name="Bajic V.B."/>
            <person name="Brenner S.E."/>
            <person name="Batalov S."/>
            <person name="Forrest A.R."/>
            <person name="Zavolan M."/>
            <person name="Davis M.J."/>
            <person name="Wilming L.G."/>
            <person name="Aidinis V."/>
            <person name="Allen J.E."/>
            <person name="Ambesi-Impiombato A."/>
            <person name="Apweiler R."/>
            <person name="Aturaliya R.N."/>
            <person name="Bailey T.L."/>
            <person name="Bansal M."/>
            <person name="Baxter L."/>
            <person name="Beisel K.W."/>
            <person name="Bersano T."/>
            <person name="Bono H."/>
            <person name="Chalk A.M."/>
            <person name="Chiu K.P."/>
            <person name="Choudhary V."/>
            <person name="Christoffels A."/>
            <person name="Clutterbuck D.R."/>
            <person name="Crowe M.L."/>
            <person name="Dalla E."/>
            <person name="Dalrymple B.P."/>
            <person name="de Bono B."/>
            <person name="Della Gatta G."/>
            <person name="di Bernardo D."/>
            <person name="Down T."/>
            <person name="Engstrom P."/>
            <person name="Fagiolini M."/>
            <person name="Faulkner G."/>
            <person name="Fletcher C.F."/>
            <person name="Fukushima T."/>
            <person name="Furuno M."/>
            <person name="Futaki S."/>
            <person name="Gariboldi M."/>
            <person name="Georgii-Hemming P."/>
            <person name="Gingeras T.R."/>
            <person name="Gojobori T."/>
            <person name="Green R.E."/>
            <person name="Gustincich S."/>
            <person name="Harbers M."/>
            <person name="Hayashi Y."/>
            <person name="Hensch T.K."/>
            <person name="Hirokawa N."/>
            <person name="Hill D."/>
            <person name="Huminiecki L."/>
            <person name="Iacono M."/>
            <person name="Ikeo K."/>
            <person name="Iwama A."/>
            <person name="Ishikawa T."/>
            <person name="Jakt M."/>
            <person name="Kanapin A."/>
            <person name="Katoh M."/>
            <person name="Kawasawa Y."/>
            <person name="Kelso J."/>
            <person name="Kitamura H."/>
            <person name="Kitano H."/>
            <person name="Kollias G."/>
            <person name="Krishnan S.P."/>
            <person name="Kruger A."/>
            <person name="Kummerfeld S.K."/>
            <person name="Kurochkin I.V."/>
            <person name="Lareau L.F."/>
            <person name="Lazarevic D."/>
            <person name="Lipovich L."/>
            <person name="Liu J."/>
            <person name="Liuni S."/>
            <person name="McWilliam S."/>
            <person name="Madan Babu M."/>
            <person name="Madera M."/>
            <person name="Marchionni L."/>
            <person name="Matsuda H."/>
            <person name="Matsuzawa S."/>
            <person name="Miki H."/>
            <person name="Mignone F."/>
            <person name="Miyake S."/>
            <person name="Morris K."/>
            <person name="Mottagui-Tabar S."/>
            <person name="Mulder N."/>
            <person name="Nakano N."/>
            <person name="Nakauchi H."/>
            <person name="Ng P."/>
            <person name="Nilsson R."/>
            <person name="Nishiguchi S."/>
            <person name="Nishikawa S."/>
            <person name="Nori F."/>
            <person name="Ohara O."/>
            <person name="Okazaki Y."/>
            <person name="Orlando V."/>
            <person name="Pang K.C."/>
            <person name="Pavan W.J."/>
            <person name="Pavesi G."/>
            <person name="Pesole G."/>
            <person name="Petrovsky N."/>
            <person name="Piazza S."/>
            <person name="Reed J."/>
            <person name="Reid J.F."/>
            <person name="Ring B.Z."/>
            <person name="Ringwald M."/>
            <person name="Rost B."/>
            <person name="Ruan Y."/>
            <person name="Salzberg S.L."/>
            <person name="Sandelin A."/>
            <person name="Schneider C."/>
            <person name="Schoenbach C."/>
            <person name="Sekiguchi K."/>
            <person name="Semple C.A."/>
            <person name="Seno S."/>
            <person name="Sessa L."/>
            <person name="Sheng Y."/>
            <person name="Shibata Y."/>
            <person name="Shimada H."/>
            <person name="Shimada K."/>
            <person name="Silva D."/>
            <person name="Sinclair B."/>
            <person name="Sperling S."/>
            <person name="Stupka E."/>
            <person name="Sugiura K."/>
            <person name="Sultana R."/>
            <person name="Takenaka Y."/>
            <person name="Taki K."/>
            <person name="Tammoja K."/>
            <person name="Tan S.L."/>
            <person name="Tang S."/>
            <person name="Taylor M.S."/>
            <person name="Tegner J."/>
            <person name="Teichmann S.A."/>
            <person name="Ueda H.R."/>
            <person name="van Nimwegen E."/>
            <person name="Verardo R."/>
            <person name="Wei C.L."/>
            <person name="Yagi K."/>
            <person name="Yamanishi H."/>
            <person name="Zabarovsky E."/>
            <person name="Zhu S."/>
            <person name="Zimmer A."/>
            <person name="Hide W."/>
            <person name="Bult C."/>
            <person name="Grimmond S.M."/>
            <person name="Teasdale R.D."/>
            <person name="Liu E.T."/>
            <person name="Brusic V."/>
            <person name="Quackenbush J."/>
            <person name="Wahlestedt C."/>
            <person name="Mattick J.S."/>
            <person name="Hume D.A."/>
            <person name="Kai C."/>
            <person name="Sasaki D."/>
            <person name="Tomaru Y."/>
            <person name="Fukuda S."/>
            <person name="Kanamori-Katayama M."/>
            <person name="Suzuki M."/>
            <person name="Aoki J."/>
            <person name="Arakawa T."/>
            <person name="Iida J."/>
            <person name="Imamura K."/>
            <person name="Itoh M."/>
            <person name="Kato T."/>
            <person name="Kawaji H."/>
            <person name="Kawagashira N."/>
            <person name="Kawashima T."/>
            <person name="Kojima M."/>
            <person name="Kondo S."/>
            <person name="Konno H."/>
            <person name="Nakano K."/>
            <person name="Ninomiya N."/>
            <person name="Nishio T."/>
            <person name="Okada M."/>
            <person name="Plessy C."/>
            <person name="Shibata K."/>
            <person name="Shiraki T."/>
            <person name="Suzuki S."/>
            <person name="Tagami M."/>
            <person name="Waki K."/>
            <person name="Watahiki A."/>
            <person name="Okamura-Oho Y."/>
            <person name="Suzuki H."/>
            <person name="Kawai J."/>
            <person name="Hayashizaki Y."/>
        </authorList>
    </citation>
    <scope>NUCLEOTIDE SEQUENCE [LARGE SCALE MRNA] (ISOFORM 1)</scope>
    <source>
        <strain>C57BL/6J</strain>
        <tissue>Pituitary</tissue>
        <tissue>Tongue</tissue>
    </source>
</reference>
<reference key="3">
    <citation type="journal article" date="2009" name="PLoS Biol.">
        <title>Lineage-specific biology revealed by a finished genome assembly of the mouse.</title>
        <authorList>
            <person name="Church D.M."/>
            <person name="Goodstadt L."/>
            <person name="Hillier L.W."/>
            <person name="Zody M.C."/>
            <person name="Goldstein S."/>
            <person name="She X."/>
            <person name="Bult C.J."/>
            <person name="Agarwala R."/>
            <person name="Cherry J.L."/>
            <person name="DiCuccio M."/>
            <person name="Hlavina W."/>
            <person name="Kapustin Y."/>
            <person name="Meric P."/>
            <person name="Maglott D."/>
            <person name="Birtle Z."/>
            <person name="Marques A.C."/>
            <person name="Graves T."/>
            <person name="Zhou S."/>
            <person name="Teague B."/>
            <person name="Potamousis K."/>
            <person name="Churas C."/>
            <person name="Place M."/>
            <person name="Herschleb J."/>
            <person name="Runnheim R."/>
            <person name="Forrest D."/>
            <person name="Amos-Landgraf J."/>
            <person name="Schwartz D.C."/>
            <person name="Cheng Z."/>
            <person name="Lindblad-Toh K."/>
            <person name="Eichler E.E."/>
            <person name="Ponting C.P."/>
        </authorList>
    </citation>
    <scope>NUCLEOTIDE SEQUENCE [LARGE SCALE GENOMIC DNA]</scope>
    <source>
        <strain>C57BL/6J</strain>
    </source>
</reference>
<reference key="4">
    <citation type="journal article" date="2004" name="Genome Res.">
        <title>The status, quality, and expansion of the NIH full-length cDNA project: the Mammalian Gene Collection (MGC).</title>
        <authorList>
            <consortium name="The MGC Project Team"/>
        </authorList>
    </citation>
    <scope>NUCLEOTIDE SEQUENCE [LARGE SCALE MRNA] (ISOFORMS 3 AND 4)</scope>
    <scope>NUCLEOTIDE SEQUENCE [LARGE SCALE MRNA] OF 357-1216 (ISOFORM 2)</scope>
    <source>
        <strain>Czech II</strain>
        <strain>FVB/N</strain>
        <tissue>Colon</tissue>
        <tissue>Eye</tissue>
        <tissue>Mammary tumor</tissue>
        <tissue>Salivary gland</tissue>
    </source>
</reference>
<protein>
    <recommendedName>
        <fullName>Protein SFI1 homolog</fullName>
    </recommendedName>
</protein>
<feature type="chain" id="PRO_0000334622" description="Protein SFI1 homolog">
    <location>
        <begin position="1"/>
        <end position="1216"/>
    </location>
</feature>
<feature type="repeat" description="HAT 1">
    <location>
        <begin position="114"/>
        <end position="146"/>
    </location>
</feature>
<feature type="repeat" description="HAT 2">
    <location>
        <begin position="148"/>
        <end position="177"/>
    </location>
</feature>
<feature type="repeat" description="HAT 3">
    <location>
        <begin position="246"/>
        <end position="278"/>
    </location>
</feature>
<feature type="repeat" description="HAT 5">
    <location>
        <begin position="375"/>
        <end position="407"/>
    </location>
</feature>
<feature type="repeat" description="HAT 6">
    <location>
        <begin position="1122"/>
        <end position="1154"/>
    </location>
</feature>
<feature type="region of interest" description="Interaction with CETN2" evidence="1">
    <location>
        <begin position="87"/>
        <end position="106"/>
    </location>
</feature>
<feature type="region of interest" description="Interaction with CETN2" evidence="1">
    <location>
        <begin position="451"/>
        <end position="470"/>
    </location>
</feature>
<feature type="region of interest" description="Interaction with CETN2" evidence="1">
    <location>
        <begin position="617"/>
        <end position="636"/>
    </location>
</feature>
<feature type="region of interest" description="Disordered" evidence="2">
    <location>
        <begin position="940"/>
        <end position="967"/>
    </location>
</feature>
<feature type="region of interest" description="Disordered" evidence="2">
    <location>
        <begin position="1003"/>
        <end position="1029"/>
    </location>
</feature>
<feature type="region of interest" description="Disordered" evidence="2">
    <location>
        <begin position="1066"/>
        <end position="1085"/>
    </location>
</feature>
<feature type="splice variant" id="VSP_033709" description="In isoform 4." evidence="4">
    <original>MEKKIGS</original>
    <variation>MTAEVNGSTSGNH</variation>
    <location>
        <begin position="1"/>
        <end position="7"/>
    </location>
</feature>
<feature type="splice variant" id="VSP_033710" description="In isoform 4." evidence="4">
    <location>
        <begin position="115"/>
        <end position="1216"/>
    </location>
</feature>
<feature type="splice variant" id="VSP_033711" description="In isoform 3." evidence="4">
    <original>CFWWSKWRWRLGQAHAEHALHAVAVKHRALSLQLQGWLRWQEQLLISQRDRRKEATAVQHYQHWQKQRSLKAWLKYLQICRVKRWQNEMAVQFHRATVLQIHFCDWQWAWEWRQSLSAHQALVVKLAGRMVLRRAFTHWKHYMLLQAEEAAQREAAAEHRQHYLLYSCFRAFKDNVTQARLQQTRKKLAQQLRDTTLLHRFWNLWQSRIEQREERVQTPSLHAALSHYR</original>
    <variation>W</variation>
    <location>
        <begin position="197"/>
        <end position="425"/>
    </location>
</feature>
<feature type="splice variant" id="VSP_033712" description="In isoform 5." evidence="3">
    <original>YSCFR</original>
    <variation>VRAWS</variation>
    <location>
        <begin position="362"/>
        <end position="366"/>
    </location>
</feature>
<feature type="splice variant" id="VSP_033713" description="In isoform 5." evidence="3">
    <location>
        <begin position="367"/>
        <end position="1125"/>
    </location>
</feature>
<feature type="splice variant" id="VSP_033714" description="In isoform 2 and isoform 3." evidence="4">
    <location>
        <begin position="604"/>
        <end position="635"/>
    </location>
</feature>
<feature type="splice variant" id="VSP_033715" description="In isoform 3." evidence="4">
    <location>
        <begin position="978"/>
        <end position="1216"/>
    </location>
</feature>
<feature type="splice variant" id="VSP_033716" description="In isoform 5." evidence="3">
    <original>E</original>
    <variation>EVRPGQPRASPWLSFLSACLVPPSRPCPQ</variation>
    <location>
        <position position="1182"/>
    </location>
</feature>
<feature type="sequence conflict" description="In Ref. 4; AAI06125." evidence="5" ref="4">
    <original>T</original>
    <variation>A</variation>
    <location>
        <position position="23"/>
    </location>
</feature>
<feature type="sequence conflict" description="In Ref. 1; BAC97969." evidence="5" ref="1">
    <original>I</original>
    <variation>S</variation>
    <location>
        <position position="133"/>
    </location>
</feature>
<feature type="sequence conflict" description="In Ref. 1; BAC97969." evidence="5" ref="1">
    <original>F</original>
    <variation>L</variation>
    <location>
        <position position="134"/>
    </location>
</feature>
<feature type="sequence conflict" description="In Ref. 4; AAH26390." evidence="5" ref="4">
    <original>H</original>
    <variation>R</variation>
    <location>
        <position position="759"/>
    </location>
</feature>
<feature type="sequence conflict" description="In Ref. 2; BAB31543." evidence="5" ref="2">
    <original>R</original>
    <variation>I</variation>
    <location>
        <position position="779"/>
    </location>
</feature>
<feature type="sequence conflict" description="In Ref. 4; AAH26390." evidence="5" ref="4">
    <original>Q</original>
    <variation>H</variation>
    <location>
        <position position="1098"/>
    </location>
</feature>
<comment type="function">
    <text evidence="1">Plays a role in the dynamic structure of centrosome-associated contractile fibers via its interaction with CETN2.</text>
</comment>
<comment type="subunit">
    <text evidence="1">Interacts with CETN2 (via C-terminus).</text>
</comment>
<comment type="subcellular location">
    <subcellularLocation>
        <location evidence="1">Cytoplasm</location>
        <location evidence="1">Cytoskeleton</location>
        <location evidence="1">Microtubule organizing center</location>
        <location evidence="1">Centrosome</location>
        <location evidence="1">Centriole</location>
    </subcellularLocation>
    <text evidence="1">Localized close to the centriole. Localizes to the distal end of centrioles.</text>
</comment>
<comment type="alternative products">
    <event type="alternative splicing"/>
    <isoform>
        <id>Q3UZY0-1</id>
        <name>1</name>
        <sequence type="displayed"/>
    </isoform>
    <isoform>
        <id>Q3UZY0-2</id>
        <name>2</name>
        <sequence type="described" ref="VSP_033714"/>
    </isoform>
    <isoform>
        <id>Q3UZY0-3</id>
        <name>3</name>
        <sequence type="described" ref="VSP_033711 VSP_033714 VSP_033715"/>
    </isoform>
    <isoform>
        <id>Q3UZY0-4</id>
        <name>4</name>
        <sequence type="described" ref="VSP_033709 VSP_033710"/>
    </isoform>
    <isoform>
        <id>Q3UZY0-5</id>
        <name>5</name>
        <sequence type="described" ref="VSP_033712 VSP_033713 VSP_033716"/>
    </isoform>
</comment>
<comment type="domain">
    <text evidence="1">CETN2-binding regions contains a conserved Trp residue in their C-terminal ends, which seems critical for interaction with CETN2.</text>
</comment>
<comment type="similarity">
    <text evidence="5">Belongs to the SFI1 family.</text>
</comment>
<comment type="sequence caution" evidence="5">
    <conflict type="erroneous initiation">
        <sequence resource="EMBL-CDS" id="AAH48950"/>
    </conflict>
</comment>
<proteinExistence type="evidence at transcript level"/>